<sequence>MPTINQLVRRPRKPSVSANKAPALQHNPQKRAVCVKVYTTTPKKPNSALRKVARVRIAGYGSEVIAYIPGEGHNLQEHSVVLIRGGRVKDLPGVRYHIVRGALDTKGVQGRKKARSKYGVKRGS</sequence>
<feature type="chain" id="PRO_0000295950" description="Small ribosomal subunit protein uS12">
    <location>
        <begin position="1"/>
        <end position="124"/>
    </location>
</feature>
<feature type="region of interest" description="Disordered" evidence="3">
    <location>
        <begin position="1"/>
        <end position="24"/>
    </location>
</feature>
<feature type="modified residue" description="3-methylthioaspartic acid" evidence="1">
    <location>
        <position position="90"/>
    </location>
</feature>
<reference key="1">
    <citation type="journal article" date="2006" name="PLoS Genet.">
        <title>Comparative genomics of emerging human ehrlichiosis agents.</title>
        <authorList>
            <person name="Dunning Hotopp J.C."/>
            <person name="Lin M."/>
            <person name="Madupu R."/>
            <person name="Crabtree J."/>
            <person name="Angiuoli S.V."/>
            <person name="Eisen J.A."/>
            <person name="Seshadri R."/>
            <person name="Ren Q."/>
            <person name="Wu M."/>
            <person name="Utterback T.R."/>
            <person name="Smith S."/>
            <person name="Lewis M."/>
            <person name="Khouri H."/>
            <person name="Zhang C."/>
            <person name="Niu H."/>
            <person name="Lin Q."/>
            <person name="Ohashi N."/>
            <person name="Zhi N."/>
            <person name="Nelson W.C."/>
            <person name="Brinkac L.M."/>
            <person name="Dodson R.J."/>
            <person name="Rosovitz M.J."/>
            <person name="Sundaram J.P."/>
            <person name="Daugherty S.C."/>
            <person name="Davidsen T."/>
            <person name="Durkin A.S."/>
            <person name="Gwinn M.L."/>
            <person name="Haft D.H."/>
            <person name="Selengut J.D."/>
            <person name="Sullivan S.A."/>
            <person name="Zafar N."/>
            <person name="Zhou L."/>
            <person name="Benahmed F."/>
            <person name="Forberger H."/>
            <person name="Halpin R."/>
            <person name="Mulligan S."/>
            <person name="Robinson J."/>
            <person name="White O."/>
            <person name="Rikihisa Y."/>
            <person name="Tettelin H."/>
        </authorList>
    </citation>
    <scope>NUCLEOTIDE SEQUENCE [LARGE SCALE GENOMIC DNA]</scope>
    <source>
        <strain>HZ</strain>
    </source>
</reference>
<evidence type="ECO:0000250" key="1"/>
<evidence type="ECO:0000255" key="2">
    <source>
        <dbReference type="HAMAP-Rule" id="MF_00403"/>
    </source>
</evidence>
<evidence type="ECO:0000256" key="3">
    <source>
        <dbReference type="SAM" id="MobiDB-lite"/>
    </source>
</evidence>
<evidence type="ECO:0000305" key="4"/>
<protein>
    <recommendedName>
        <fullName evidence="2">Small ribosomal subunit protein uS12</fullName>
    </recommendedName>
    <alternativeName>
        <fullName evidence="4">30S ribosomal protein S12</fullName>
    </alternativeName>
</protein>
<proteinExistence type="inferred from homology"/>
<accession>Q2GJ58</accession>
<gene>
    <name evidence="2" type="primary">rpsL</name>
    <name type="ordered locus">APH_1035</name>
</gene>
<keyword id="KW-0488">Methylation</keyword>
<keyword id="KW-0687">Ribonucleoprotein</keyword>
<keyword id="KW-0689">Ribosomal protein</keyword>
<keyword id="KW-0694">RNA-binding</keyword>
<keyword id="KW-0699">rRNA-binding</keyword>
<keyword id="KW-0820">tRNA-binding</keyword>
<comment type="function">
    <text evidence="2">With S4 and S5 plays an important role in translational accuracy.</text>
</comment>
<comment type="function">
    <text evidence="2">Interacts with and stabilizes bases of the 16S rRNA that are involved in tRNA selection in the A site and with the mRNA backbone. Located at the interface of the 30S and 50S subunits, it traverses the body of the 30S subunit contacting proteins on the other side and probably holding the rRNA structure together. The combined cluster of proteins S8, S12 and S17 appears to hold together the shoulder and platform of the 30S subunit.</text>
</comment>
<comment type="subunit">
    <text evidence="2">Part of the 30S ribosomal subunit. Contacts proteins S8 and S17. May interact with IF1 in the 30S initiation complex.</text>
</comment>
<comment type="similarity">
    <text evidence="2">Belongs to the universal ribosomal protein uS12 family.</text>
</comment>
<name>RS12_ANAPZ</name>
<organism>
    <name type="scientific">Anaplasma phagocytophilum (strain HZ)</name>
    <dbReference type="NCBI Taxonomy" id="212042"/>
    <lineage>
        <taxon>Bacteria</taxon>
        <taxon>Pseudomonadati</taxon>
        <taxon>Pseudomonadota</taxon>
        <taxon>Alphaproteobacteria</taxon>
        <taxon>Rickettsiales</taxon>
        <taxon>Anaplasmataceae</taxon>
        <taxon>Anaplasma</taxon>
        <taxon>phagocytophilum group</taxon>
    </lineage>
</organism>
<dbReference type="EMBL" id="CP000235">
    <property type="protein sequence ID" value="ABD44411.1"/>
    <property type="molecule type" value="Genomic_DNA"/>
</dbReference>
<dbReference type="RefSeq" id="WP_011451105.1">
    <property type="nucleotide sequence ID" value="NC_007797.1"/>
</dbReference>
<dbReference type="SMR" id="Q2GJ58"/>
<dbReference type="STRING" id="212042.APH_1035"/>
<dbReference type="PaxDb" id="212042-APH_1035"/>
<dbReference type="EnsemblBacteria" id="ABD44411">
    <property type="protein sequence ID" value="ABD44411"/>
    <property type="gene ID" value="APH_1035"/>
</dbReference>
<dbReference type="GeneID" id="92748033"/>
<dbReference type="KEGG" id="aph:APH_1035"/>
<dbReference type="eggNOG" id="COG0048">
    <property type="taxonomic scope" value="Bacteria"/>
</dbReference>
<dbReference type="HOGENOM" id="CLU_104295_1_2_5"/>
<dbReference type="Proteomes" id="UP000001943">
    <property type="component" value="Chromosome"/>
</dbReference>
<dbReference type="GO" id="GO:0015935">
    <property type="term" value="C:small ribosomal subunit"/>
    <property type="evidence" value="ECO:0007669"/>
    <property type="project" value="InterPro"/>
</dbReference>
<dbReference type="GO" id="GO:0019843">
    <property type="term" value="F:rRNA binding"/>
    <property type="evidence" value="ECO:0007669"/>
    <property type="project" value="UniProtKB-UniRule"/>
</dbReference>
<dbReference type="GO" id="GO:0003735">
    <property type="term" value="F:structural constituent of ribosome"/>
    <property type="evidence" value="ECO:0007669"/>
    <property type="project" value="InterPro"/>
</dbReference>
<dbReference type="GO" id="GO:0000049">
    <property type="term" value="F:tRNA binding"/>
    <property type="evidence" value="ECO:0007669"/>
    <property type="project" value="UniProtKB-UniRule"/>
</dbReference>
<dbReference type="GO" id="GO:0006412">
    <property type="term" value="P:translation"/>
    <property type="evidence" value="ECO:0007669"/>
    <property type="project" value="UniProtKB-UniRule"/>
</dbReference>
<dbReference type="CDD" id="cd03368">
    <property type="entry name" value="Ribosomal_S12"/>
    <property type="match status" value="1"/>
</dbReference>
<dbReference type="FunFam" id="2.40.50.140:FF:000001">
    <property type="entry name" value="30S ribosomal protein S12"/>
    <property type="match status" value="1"/>
</dbReference>
<dbReference type="Gene3D" id="2.40.50.140">
    <property type="entry name" value="Nucleic acid-binding proteins"/>
    <property type="match status" value="1"/>
</dbReference>
<dbReference type="HAMAP" id="MF_00403_B">
    <property type="entry name" value="Ribosomal_uS12_B"/>
    <property type="match status" value="1"/>
</dbReference>
<dbReference type="InterPro" id="IPR012340">
    <property type="entry name" value="NA-bd_OB-fold"/>
</dbReference>
<dbReference type="InterPro" id="IPR006032">
    <property type="entry name" value="Ribosomal_uS12"/>
</dbReference>
<dbReference type="InterPro" id="IPR005679">
    <property type="entry name" value="Ribosomal_uS12_bac"/>
</dbReference>
<dbReference type="NCBIfam" id="TIGR00981">
    <property type="entry name" value="rpsL_bact"/>
    <property type="match status" value="1"/>
</dbReference>
<dbReference type="PANTHER" id="PTHR11652">
    <property type="entry name" value="30S RIBOSOMAL PROTEIN S12 FAMILY MEMBER"/>
    <property type="match status" value="1"/>
</dbReference>
<dbReference type="Pfam" id="PF00164">
    <property type="entry name" value="Ribosom_S12_S23"/>
    <property type="match status" value="1"/>
</dbReference>
<dbReference type="PIRSF" id="PIRSF002133">
    <property type="entry name" value="Ribosomal_S12/S23"/>
    <property type="match status" value="1"/>
</dbReference>
<dbReference type="PRINTS" id="PR01034">
    <property type="entry name" value="RIBOSOMALS12"/>
</dbReference>
<dbReference type="SUPFAM" id="SSF50249">
    <property type="entry name" value="Nucleic acid-binding proteins"/>
    <property type="match status" value="1"/>
</dbReference>
<dbReference type="PROSITE" id="PS00055">
    <property type="entry name" value="RIBOSOMAL_S12"/>
    <property type="match status" value="1"/>
</dbReference>